<dbReference type="EC" id="5.1.99.6"/>
<dbReference type="EMBL" id="CH916370">
    <property type="protein sequence ID" value="EDV99805.1"/>
    <property type="molecule type" value="Genomic_DNA"/>
</dbReference>
<dbReference type="SMR" id="B4JJQ3"/>
<dbReference type="FunCoup" id="B4JJQ3">
    <property type="interactions" value="1364"/>
</dbReference>
<dbReference type="STRING" id="7222.B4JJQ3"/>
<dbReference type="EnsemblMetazoa" id="FBtr0457307">
    <property type="protein sequence ID" value="FBpp0407831"/>
    <property type="gene ID" value="FBgn0120004"/>
</dbReference>
<dbReference type="EnsemblMetazoa" id="XM_001991145.3">
    <property type="protein sequence ID" value="XP_001991181.1"/>
    <property type="gene ID" value="LOC6565426"/>
</dbReference>
<dbReference type="GeneID" id="6565426"/>
<dbReference type="KEGG" id="dgr:6565426"/>
<dbReference type="eggNOG" id="KOG2585">
    <property type="taxonomic scope" value="Eukaryota"/>
</dbReference>
<dbReference type="HOGENOM" id="CLU_024853_3_0_1"/>
<dbReference type="InParanoid" id="B4JJQ3"/>
<dbReference type="OMA" id="RHLFHYG"/>
<dbReference type="OrthoDB" id="10064708at2759"/>
<dbReference type="PhylomeDB" id="B4JJQ3"/>
<dbReference type="Proteomes" id="UP000001070">
    <property type="component" value="Unassembled WGS sequence"/>
</dbReference>
<dbReference type="GO" id="GO:0005739">
    <property type="term" value="C:mitochondrion"/>
    <property type="evidence" value="ECO:0007669"/>
    <property type="project" value="TreeGrafter"/>
</dbReference>
<dbReference type="GO" id="GO:0046872">
    <property type="term" value="F:metal ion binding"/>
    <property type="evidence" value="ECO:0007669"/>
    <property type="project" value="UniProtKB-KW"/>
</dbReference>
<dbReference type="GO" id="GO:0052856">
    <property type="term" value="F:NAD(P)HX epimerase activity"/>
    <property type="evidence" value="ECO:0007669"/>
    <property type="project" value="UniProtKB-UniRule"/>
</dbReference>
<dbReference type="GO" id="GO:0000166">
    <property type="term" value="F:nucleotide binding"/>
    <property type="evidence" value="ECO:0007669"/>
    <property type="project" value="UniProtKB-KW"/>
</dbReference>
<dbReference type="FunFam" id="3.40.50.10260:FF:000013">
    <property type="entry name" value="NAD(P)H-hydrate epimerase"/>
    <property type="match status" value="1"/>
</dbReference>
<dbReference type="Gene3D" id="3.40.50.10260">
    <property type="entry name" value="YjeF N-terminal domain"/>
    <property type="match status" value="1"/>
</dbReference>
<dbReference type="HAMAP" id="MF_01966">
    <property type="entry name" value="NADHX_epimerase"/>
    <property type="match status" value="1"/>
</dbReference>
<dbReference type="InterPro" id="IPR004443">
    <property type="entry name" value="YjeF_N_dom"/>
</dbReference>
<dbReference type="InterPro" id="IPR036652">
    <property type="entry name" value="YjeF_N_dom_sf"/>
</dbReference>
<dbReference type="InterPro" id="IPR032976">
    <property type="entry name" value="YJEFN_prot_NAXE-like"/>
</dbReference>
<dbReference type="NCBIfam" id="TIGR00197">
    <property type="entry name" value="yjeF_nterm"/>
    <property type="match status" value="1"/>
</dbReference>
<dbReference type="PANTHER" id="PTHR13232">
    <property type="entry name" value="NAD(P)H-HYDRATE EPIMERASE"/>
    <property type="match status" value="1"/>
</dbReference>
<dbReference type="PANTHER" id="PTHR13232:SF10">
    <property type="entry name" value="NAD(P)H-HYDRATE EPIMERASE"/>
    <property type="match status" value="1"/>
</dbReference>
<dbReference type="Pfam" id="PF03853">
    <property type="entry name" value="YjeF_N"/>
    <property type="match status" value="1"/>
</dbReference>
<dbReference type="SUPFAM" id="SSF64153">
    <property type="entry name" value="YjeF N-terminal domain-like"/>
    <property type="match status" value="1"/>
</dbReference>
<dbReference type="PROSITE" id="PS51385">
    <property type="entry name" value="YJEF_N"/>
    <property type="match status" value="1"/>
</dbReference>
<proteinExistence type="inferred from homology"/>
<keyword id="KW-0413">Isomerase</keyword>
<keyword id="KW-0479">Metal-binding</keyword>
<keyword id="KW-0520">NAD</keyword>
<keyword id="KW-0521">NADP</keyword>
<keyword id="KW-0547">Nucleotide-binding</keyword>
<keyword id="KW-0630">Potassium</keyword>
<keyword id="KW-1185">Reference proteome</keyword>
<reference evidence="2" key="1">
    <citation type="journal article" date="2007" name="Nature">
        <title>Evolution of genes and genomes on the Drosophila phylogeny.</title>
        <authorList>
            <consortium name="Drosophila 12 genomes consortium"/>
        </authorList>
    </citation>
    <scope>NUCLEOTIDE SEQUENCE [LARGE SCALE GENOMIC DNA]</scope>
    <source>
        <strain evidence="2">Tucson 15287-2541.00</strain>
    </source>
</reference>
<organism>
    <name type="scientific">Drosophila grimshawi</name>
    <name type="common">Hawaiian fruit fly</name>
    <name type="synonym">Idiomyia grimshawi</name>
    <dbReference type="NCBI Taxonomy" id="7222"/>
    <lineage>
        <taxon>Eukaryota</taxon>
        <taxon>Metazoa</taxon>
        <taxon>Ecdysozoa</taxon>
        <taxon>Arthropoda</taxon>
        <taxon>Hexapoda</taxon>
        <taxon>Insecta</taxon>
        <taxon>Pterygota</taxon>
        <taxon>Neoptera</taxon>
        <taxon>Endopterygota</taxon>
        <taxon>Diptera</taxon>
        <taxon>Brachycera</taxon>
        <taxon>Muscomorpha</taxon>
        <taxon>Ephydroidea</taxon>
        <taxon>Drosophilidae</taxon>
        <taxon>Drosophila</taxon>
        <taxon>Hawaiian Drosophila</taxon>
    </lineage>
</organism>
<comment type="function">
    <text evidence="1">Catalyzes the epimerization of the S- and R-forms of NAD(P)HX, a damaged form of NAD(P)H that is a result of enzymatic or heat-dependent hydration. This is a prerequisite for the S-specific NAD(P)H-hydrate dehydratase to allow the repair of both epimers of NAD(P)HX.</text>
</comment>
<comment type="catalytic activity">
    <reaction>
        <text>(6R)-NADHX = (6S)-NADHX</text>
        <dbReference type="Rhea" id="RHEA:32215"/>
        <dbReference type="ChEBI" id="CHEBI:64074"/>
        <dbReference type="ChEBI" id="CHEBI:64075"/>
        <dbReference type="EC" id="5.1.99.6"/>
    </reaction>
</comment>
<comment type="catalytic activity">
    <reaction>
        <text>(6R)-NADPHX = (6S)-NADPHX</text>
        <dbReference type="Rhea" id="RHEA:32227"/>
        <dbReference type="ChEBI" id="CHEBI:64076"/>
        <dbReference type="ChEBI" id="CHEBI:64077"/>
        <dbReference type="EC" id="5.1.99.6"/>
    </reaction>
</comment>
<comment type="cofactor">
    <cofactor evidence="1">
        <name>K(+)</name>
        <dbReference type="ChEBI" id="CHEBI:29103"/>
    </cofactor>
    <text evidence="1">Binds 1 potassium ion per subunit.</text>
</comment>
<comment type="similarity">
    <text evidence="1">Belongs to the NnrE/AIBP family.</text>
</comment>
<name>NNRE_DROGR</name>
<evidence type="ECO:0000255" key="1">
    <source>
        <dbReference type="HAMAP-Rule" id="MF_03159"/>
    </source>
</evidence>
<evidence type="ECO:0000312" key="2">
    <source>
        <dbReference type="EMBL" id="EDV99805.1"/>
    </source>
</evidence>
<sequence length="233" mass="26029">MVKYLNQKEAINVDLELFNEYKFSVDQLMELAGLSCAHAITKCFPADRFGRVLVCCGPGNNGGDGLVCARHLALMGYTPAIYYPKPTAKPLFENLSHQCQRMEICRIDECPTVETSANSYDLIVDALFGFSFKPPVRVDFVPVVELLQQTKLPIASVDIPSGWDVENGKLNDCDLEPTLLISLTAPKLCAKHFKGKHHFLGGRFVPPALQRKYELNLPEYPGNELCLELETHK</sequence>
<feature type="chain" id="PRO_0000379427" description="NAD(P)H-hydrate epimerase">
    <location>
        <begin position="1"/>
        <end position="233"/>
    </location>
</feature>
<feature type="domain" description="YjeF N-terminal" evidence="1">
    <location>
        <begin position="10"/>
        <end position="217"/>
    </location>
</feature>
<feature type="binding site" evidence="1">
    <location>
        <begin position="60"/>
        <end position="64"/>
    </location>
    <ligand>
        <name>(6S)-NADPHX</name>
        <dbReference type="ChEBI" id="CHEBI:64076"/>
    </ligand>
</feature>
<feature type="binding site" evidence="1">
    <location>
        <position position="61"/>
    </location>
    <ligand>
        <name>K(+)</name>
        <dbReference type="ChEBI" id="CHEBI:29103"/>
    </ligand>
</feature>
<feature type="binding site" evidence="1">
    <location>
        <position position="125"/>
    </location>
    <ligand>
        <name>K(+)</name>
        <dbReference type="ChEBI" id="CHEBI:29103"/>
    </ligand>
</feature>
<feature type="binding site" evidence="1">
    <location>
        <begin position="129"/>
        <end position="135"/>
    </location>
    <ligand>
        <name>(6S)-NADPHX</name>
        <dbReference type="ChEBI" id="CHEBI:64076"/>
    </ligand>
</feature>
<feature type="binding site" evidence="1">
    <location>
        <position position="158"/>
    </location>
    <ligand>
        <name>(6S)-NADPHX</name>
        <dbReference type="ChEBI" id="CHEBI:64076"/>
    </ligand>
</feature>
<feature type="binding site" evidence="1">
    <location>
        <position position="161"/>
    </location>
    <ligand>
        <name>K(+)</name>
        <dbReference type="ChEBI" id="CHEBI:29103"/>
    </ligand>
</feature>
<gene>
    <name type="ORF">GH12525</name>
</gene>
<accession>B4JJQ3</accession>
<protein>
    <recommendedName>
        <fullName evidence="1">NAD(P)H-hydrate epimerase</fullName>
        <ecNumber>5.1.99.6</ecNumber>
    </recommendedName>
    <alternativeName>
        <fullName evidence="1">NAD(P)HX epimerase</fullName>
    </alternativeName>
</protein>